<keyword id="KW-0687">Ribonucleoprotein</keyword>
<keyword id="KW-0689">Ribosomal protein</keyword>
<keyword id="KW-0694">RNA-binding</keyword>
<keyword id="KW-0699">rRNA-binding</keyword>
<keyword id="KW-0820">tRNA-binding</keyword>
<accession>Q3BWX1</accession>
<dbReference type="EMBL" id="AM039952">
    <property type="protein sequence ID" value="CAJ22642.1"/>
    <property type="molecule type" value="Genomic_DNA"/>
</dbReference>
<dbReference type="RefSeq" id="WP_008571668.1">
    <property type="nucleotide sequence ID" value="NZ_CP017190.1"/>
</dbReference>
<dbReference type="SMR" id="Q3BWX1"/>
<dbReference type="STRING" id="456327.BJD11_17680"/>
<dbReference type="GeneID" id="97509348"/>
<dbReference type="KEGG" id="xcv:XCV1011"/>
<dbReference type="eggNOG" id="COG0094">
    <property type="taxonomic scope" value="Bacteria"/>
</dbReference>
<dbReference type="HOGENOM" id="CLU_061015_2_1_6"/>
<dbReference type="Proteomes" id="UP000007069">
    <property type="component" value="Chromosome"/>
</dbReference>
<dbReference type="GO" id="GO:1990904">
    <property type="term" value="C:ribonucleoprotein complex"/>
    <property type="evidence" value="ECO:0007669"/>
    <property type="project" value="UniProtKB-KW"/>
</dbReference>
<dbReference type="GO" id="GO:0005840">
    <property type="term" value="C:ribosome"/>
    <property type="evidence" value="ECO:0007669"/>
    <property type="project" value="UniProtKB-KW"/>
</dbReference>
<dbReference type="GO" id="GO:0019843">
    <property type="term" value="F:rRNA binding"/>
    <property type="evidence" value="ECO:0007669"/>
    <property type="project" value="UniProtKB-UniRule"/>
</dbReference>
<dbReference type="GO" id="GO:0003735">
    <property type="term" value="F:structural constituent of ribosome"/>
    <property type="evidence" value="ECO:0007669"/>
    <property type="project" value="InterPro"/>
</dbReference>
<dbReference type="GO" id="GO:0000049">
    <property type="term" value="F:tRNA binding"/>
    <property type="evidence" value="ECO:0007669"/>
    <property type="project" value="UniProtKB-UniRule"/>
</dbReference>
<dbReference type="GO" id="GO:0006412">
    <property type="term" value="P:translation"/>
    <property type="evidence" value="ECO:0007669"/>
    <property type="project" value="UniProtKB-UniRule"/>
</dbReference>
<dbReference type="FunFam" id="3.30.1440.10:FF:000001">
    <property type="entry name" value="50S ribosomal protein L5"/>
    <property type="match status" value="1"/>
</dbReference>
<dbReference type="Gene3D" id="3.30.1440.10">
    <property type="match status" value="1"/>
</dbReference>
<dbReference type="HAMAP" id="MF_01333_B">
    <property type="entry name" value="Ribosomal_uL5_B"/>
    <property type="match status" value="1"/>
</dbReference>
<dbReference type="InterPro" id="IPR002132">
    <property type="entry name" value="Ribosomal_uL5"/>
</dbReference>
<dbReference type="InterPro" id="IPR020930">
    <property type="entry name" value="Ribosomal_uL5_bac-type"/>
</dbReference>
<dbReference type="InterPro" id="IPR031309">
    <property type="entry name" value="Ribosomal_uL5_C"/>
</dbReference>
<dbReference type="InterPro" id="IPR020929">
    <property type="entry name" value="Ribosomal_uL5_CS"/>
</dbReference>
<dbReference type="InterPro" id="IPR022803">
    <property type="entry name" value="Ribosomal_uL5_dom_sf"/>
</dbReference>
<dbReference type="InterPro" id="IPR031310">
    <property type="entry name" value="Ribosomal_uL5_N"/>
</dbReference>
<dbReference type="NCBIfam" id="NF000585">
    <property type="entry name" value="PRK00010.1"/>
    <property type="match status" value="1"/>
</dbReference>
<dbReference type="PANTHER" id="PTHR11994">
    <property type="entry name" value="60S RIBOSOMAL PROTEIN L11-RELATED"/>
    <property type="match status" value="1"/>
</dbReference>
<dbReference type="Pfam" id="PF00281">
    <property type="entry name" value="Ribosomal_L5"/>
    <property type="match status" value="1"/>
</dbReference>
<dbReference type="Pfam" id="PF00673">
    <property type="entry name" value="Ribosomal_L5_C"/>
    <property type="match status" value="1"/>
</dbReference>
<dbReference type="PIRSF" id="PIRSF002161">
    <property type="entry name" value="Ribosomal_L5"/>
    <property type="match status" value="1"/>
</dbReference>
<dbReference type="SUPFAM" id="SSF55282">
    <property type="entry name" value="RL5-like"/>
    <property type="match status" value="1"/>
</dbReference>
<dbReference type="PROSITE" id="PS00358">
    <property type="entry name" value="RIBOSOMAL_L5"/>
    <property type="match status" value="1"/>
</dbReference>
<comment type="function">
    <text evidence="1">This is one of the proteins that bind and probably mediate the attachment of the 5S RNA into the large ribosomal subunit, where it forms part of the central protuberance. In the 70S ribosome it contacts protein S13 of the 30S subunit (bridge B1b), connecting the 2 subunits; this bridge is implicated in subunit movement. Contacts the P site tRNA; the 5S rRNA and some of its associated proteins might help stabilize positioning of ribosome-bound tRNAs.</text>
</comment>
<comment type="subunit">
    <text evidence="1">Part of the 50S ribosomal subunit; part of the 5S rRNA/L5/L18/L25 subcomplex. Contacts the 5S rRNA and the P site tRNA. Forms a bridge to the 30S subunit in the 70S ribosome.</text>
</comment>
<comment type="similarity">
    <text evidence="1">Belongs to the universal ribosomal protein uL5 family.</text>
</comment>
<feature type="chain" id="PRO_0000243087" description="Large ribosomal subunit protein uL5">
    <location>
        <begin position="1"/>
        <end position="180"/>
    </location>
</feature>
<evidence type="ECO:0000255" key="1">
    <source>
        <dbReference type="HAMAP-Rule" id="MF_01333"/>
    </source>
</evidence>
<evidence type="ECO:0000305" key="2"/>
<reference key="1">
    <citation type="journal article" date="2005" name="J. Bacteriol.">
        <title>Insights into genome plasticity and pathogenicity of the plant pathogenic Bacterium Xanthomonas campestris pv. vesicatoria revealed by the complete genome sequence.</title>
        <authorList>
            <person name="Thieme F."/>
            <person name="Koebnik R."/>
            <person name="Bekel T."/>
            <person name="Berger C."/>
            <person name="Boch J."/>
            <person name="Buettner D."/>
            <person name="Caldana C."/>
            <person name="Gaigalat L."/>
            <person name="Goesmann A."/>
            <person name="Kay S."/>
            <person name="Kirchner O."/>
            <person name="Lanz C."/>
            <person name="Linke B."/>
            <person name="McHardy A.C."/>
            <person name="Meyer F."/>
            <person name="Mittenhuber G."/>
            <person name="Nies D.H."/>
            <person name="Niesbach-Kloesgen U."/>
            <person name="Patschkowski T."/>
            <person name="Rueckert C."/>
            <person name="Rupp O."/>
            <person name="Schneiker S."/>
            <person name="Schuster S.C."/>
            <person name="Vorhoelter F.J."/>
            <person name="Weber E."/>
            <person name="Puehler A."/>
            <person name="Bonas U."/>
            <person name="Bartels D."/>
            <person name="Kaiser O."/>
        </authorList>
    </citation>
    <scope>NUCLEOTIDE SEQUENCE [LARGE SCALE GENOMIC DNA]</scope>
    <source>
        <strain>85-10</strain>
    </source>
</reference>
<name>RL5_XANE5</name>
<gene>
    <name evidence="1" type="primary">rplE</name>
    <name type="ordered locus">XCV1011</name>
</gene>
<organism>
    <name type="scientific">Xanthomonas euvesicatoria pv. vesicatoria (strain 85-10)</name>
    <name type="common">Xanthomonas campestris pv. vesicatoria</name>
    <dbReference type="NCBI Taxonomy" id="316273"/>
    <lineage>
        <taxon>Bacteria</taxon>
        <taxon>Pseudomonadati</taxon>
        <taxon>Pseudomonadota</taxon>
        <taxon>Gammaproteobacteria</taxon>
        <taxon>Lysobacterales</taxon>
        <taxon>Lysobacteraceae</taxon>
        <taxon>Xanthomonas</taxon>
    </lineage>
</organism>
<protein>
    <recommendedName>
        <fullName evidence="1">Large ribosomal subunit protein uL5</fullName>
    </recommendedName>
    <alternativeName>
        <fullName evidence="2">50S ribosomal protein L5</fullName>
    </alternativeName>
</protein>
<proteinExistence type="inferred from homology"/>
<sequence length="180" mass="20143">MNTRLEKFYKENVVPALMKEFGYTNPMEVPKLVKVTLNMGVGEAATNKKILENAVADMAKISGQKPVVTKSRVSVASFKIRDGWPIGCKTTLRRAKMYEFLDRLINISLPRVRDFRGVSGRSFDGRGNFNMGVKEQIIFPEIDFDAVDAIRGMDIAITTTAKTDAEAKALLAAFKFPFRN</sequence>